<feature type="chain" id="PRO_0000055780" description="RING-H2 finger protein ATL28">
    <location>
        <begin position="1"/>
        <end position="254"/>
    </location>
</feature>
<feature type="transmembrane region" description="Helical" evidence="2">
    <location>
        <begin position="25"/>
        <end position="45"/>
    </location>
</feature>
<feature type="zinc finger region" description="RING-type; atypical" evidence="3">
    <location>
        <begin position="103"/>
        <end position="145"/>
    </location>
</feature>
<evidence type="ECO:0000250" key="1"/>
<evidence type="ECO:0000255" key="2"/>
<evidence type="ECO:0000255" key="3">
    <source>
        <dbReference type="PROSITE-ProRule" id="PRU00175"/>
    </source>
</evidence>
<evidence type="ECO:0000305" key="4"/>
<keyword id="KW-0472">Membrane</keyword>
<keyword id="KW-0479">Metal-binding</keyword>
<keyword id="KW-1185">Reference proteome</keyword>
<keyword id="KW-0808">Transferase</keyword>
<keyword id="KW-0812">Transmembrane</keyword>
<keyword id="KW-1133">Transmembrane helix</keyword>
<keyword id="KW-0833">Ubl conjugation pathway</keyword>
<keyword id="KW-0862">Zinc</keyword>
<keyword id="KW-0863">Zinc-finger</keyword>
<sequence length="254" mass="28623">MSSTTSIDSIPATAVFPSVSMPVTVVLTGVLLFVIFAGFFSLFLWQFLLNRLFTTWNLQRTPYGDLIHVATPPENTGLDPFIIRSFPVFHYSSATKKNHGTECAICLSEFSDEDTVRLITVCRHPFHSNCIDLWFELHKTCPVCRCELDPGMIGSGRLESFHNTVTITIQDINHDEENPPTAGSSKRLIEASAWRFSRSHSTGHFMVKTTDANVKSKRRHYQTGSCVSFDELTRYEGAGWQWLGDSSHISRIEV</sequence>
<name>ATL28_ARATH</name>
<dbReference type="EC" id="2.3.2.27" evidence="4"/>
<dbReference type="EMBL" id="AC005314">
    <property type="protein sequence ID" value="AAC36179.1"/>
    <property type="status" value="ALT_INIT"/>
    <property type="molecule type" value="Genomic_DNA"/>
</dbReference>
<dbReference type="EMBL" id="CP002685">
    <property type="protein sequence ID" value="AEC09107.1"/>
    <property type="molecule type" value="Genomic_DNA"/>
</dbReference>
<dbReference type="EMBL" id="BT012632">
    <property type="protein sequence ID" value="AAT06451.1"/>
    <property type="molecule type" value="mRNA"/>
</dbReference>
<dbReference type="PIR" id="D84768">
    <property type="entry name" value="D84768"/>
</dbReference>
<dbReference type="RefSeq" id="NP_181085.2">
    <property type="nucleotide sequence ID" value="NM_129094.2"/>
</dbReference>
<dbReference type="SMR" id="Q6NKR1"/>
<dbReference type="PaxDb" id="3702-AT2G35420.1"/>
<dbReference type="EnsemblPlants" id="AT2G35420.1">
    <property type="protein sequence ID" value="AT2G35420.1"/>
    <property type="gene ID" value="AT2G35420"/>
</dbReference>
<dbReference type="GeneID" id="818108"/>
<dbReference type="Gramene" id="AT2G35420.1">
    <property type="protein sequence ID" value="AT2G35420.1"/>
    <property type="gene ID" value="AT2G35420"/>
</dbReference>
<dbReference type="KEGG" id="ath:AT2G35420"/>
<dbReference type="Araport" id="AT2G35420"/>
<dbReference type="TAIR" id="AT2G35420">
    <property type="gene designation" value="ATL28"/>
</dbReference>
<dbReference type="eggNOG" id="KOG0800">
    <property type="taxonomic scope" value="Eukaryota"/>
</dbReference>
<dbReference type="HOGENOM" id="CLU_035191_3_1_1"/>
<dbReference type="InParanoid" id="Q6NKR1"/>
<dbReference type="OMA" id="WFELHKT"/>
<dbReference type="PhylomeDB" id="Q6NKR1"/>
<dbReference type="UniPathway" id="UPA00143"/>
<dbReference type="PRO" id="PR:Q6NKR1"/>
<dbReference type="Proteomes" id="UP000006548">
    <property type="component" value="Chromosome 2"/>
</dbReference>
<dbReference type="ExpressionAtlas" id="Q6NKR1">
    <property type="expression patterns" value="baseline and differential"/>
</dbReference>
<dbReference type="GO" id="GO:0016020">
    <property type="term" value="C:membrane"/>
    <property type="evidence" value="ECO:0007669"/>
    <property type="project" value="UniProtKB-SubCell"/>
</dbReference>
<dbReference type="GO" id="GO:0016740">
    <property type="term" value="F:transferase activity"/>
    <property type="evidence" value="ECO:0007669"/>
    <property type="project" value="UniProtKB-KW"/>
</dbReference>
<dbReference type="GO" id="GO:0008270">
    <property type="term" value="F:zinc ion binding"/>
    <property type="evidence" value="ECO:0007669"/>
    <property type="project" value="UniProtKB-KW"/>
</dbReference>
<dbReference type="GO" id="GO:0016567">
    <property type="term" value="P:protein ubiquitination"/>
    <property type="evidence" value="ECO:0007669"/>
    <property type="project" value="UniProtKB-UniPathway"/>
</dbReference>
<dbReference type="CDD" id="cd16454">
    <property type="entry name" value="RING-H2_PA-TM-RING"/>
    <property type="match status" value="1"/>
</dbReference>
<dbReference type="FunFam" id="3.30.40.10:FF:000830">
    <property type="entry name" value="RING-H2 finger protein ATL28"/>
    <property type="match status" value="1"/>
</dbReference>
<dbReference type="Gene3D" id="3.30.40.10">
    <property type="entry name" value="Zinc/RING finger domain, C3HC4 (zinc finger)"/>
    <property type="match status" value="1"/>
</dbReference>
<dbReference type="InterPro" id="IPR053238">
    <property type="entry name" value="RING-H2_zinc_finger"/>
</dbReference>
<dbReference type="InterPro" id="IPR001841">
    <property type="entry name" value="Znf_RING"/>
</dbReference>
<dbReference type="InterPro" id="IPR013083">
    <property type="entry name" value="Znf_RING/FYVE/PHD"/>
</dbReference>
<dbReference type="PANTHER" id="PTHR14155">
    <property type="entry name" value="RING FINGER DOMAIN-CONTAINING"/>
    <property type="match status" value="1"/>
</dbReference>
<dbReference type="PANTHER" id="PTHR14155:SF574">
    <property type="entry name" value="RING-H2 FINGER PROTEIN ATL28"/>
    <property type="match status" value="1"/>
</dbReference>
<dbReference type="Pfam" id="PF13639">
    <property type="entry name" value="zf-RING_2"/>
    <property type="match status" value="1"/>
</dbReference>
<dbReference type="SMART" id="SM00184">
    <property type="entry name" value="RING"/>
    <property type="match status" value="1"/>
</dbReference>
<dbReference type="SUPFAM" id="SSF57850">
    <property type="entry name" value="RING/U-box"/>
    <property type="match status" value="1"/>
</dbReference>
<dbReference type="PROSITE" id="PS50089">
    <property type="entry name" value="ZF_RING_2"/>
    <property type="match status" value="1"/>
</dbReference>
<accession>Q6NKR1</accession>
<accession>O82298</accession>
<comment type="catalytic activity">
    <reaction evidence="4">
        <text>S-ubiquitinyl-[E2 ubiquitin-conjugating enzyme]-L-cysteine + [acceptor protein]-L-lysine = [E2 ubiquitin-conjugating enzyme]-L-cysteine + N(6)-ubiquitinyl-[acceptor protein]-L-lysine.</text>
        <dbReference type="EC" id="2.3.2.27"/>
    </reaction>
</comment>
<comment type="pathway">
    <text>Protein modification; protein ubiquitination.</text>
</comment>
<comment type="subcellular location">
    <subcellularLocation>
        <location evidence="4">Membrane</location>
        <topology evidence="4">Single-pass membrane protein</topology>
    </subcellularLocation>
</comment>
<comment type="domain">
    <text evidence="1">The RING-type zinc finger domain mediates binding to an E2 ubiquitin-conjugating enzyme.</text>
</comment>
<comment type="similarity">
    <text evidence="4">Belongs to the RING-type zinc finger family. ATL subfamily.</text>
</comment>
<comment type="sequence caution" evidence="4">
    <conflict type="erroneous initiation">
        <sequence resource="EMBL-CDS" id="AAC36179"/>
    </conflict>
</comment>
<proteinExistence type="evidence at transcript level"/>
<organism>
    <name type="scientific">Arabidopsis thaliana</name>
    <name type="common">Mouse-ear cress</name>
    <dbReference type="NCBI Taxonomy" id="3702"/>
    <lineage>
        <taxon>Eukaryota</taxon>
        <taxon>Viridiplantae</taxon>
        <taxon>Streptophyta</taxon>
        <taxon>Embryophyta</taxon>
        <taxon>Tracheophyta</taxon>
        <taxon>Spermatophyta</taxon>
        <taxon>Magnoliopsida</taxon>
        <taxon>eudicotyledons</taxon>
        <taxon>Gunneridae</taxon>
        <taxon>Pentapetalae</taxon>
        <taxon>rosids</taxon>
        <taxon>malvids</taxon>
        <taxon>Brassicales</taxon>
        <taxon>Brassicaceae</taxon>
        <taxon>Camelineae</taxon>
        <taxon>Arabidopsis</taxon>
    </lineage>
</organism>
<reference key="1">
    <citation type="journal article" date="1999" name="Nature">
        <title>Sequence and analysis of chromosome 2 of the plant Arabidopsis thaliana.</title>
        <authorList>
            <person name="Lin X."/>
            <person name="Kaul S."/>
            <person name="Rounsley S.D."/>
            <person name="Shea T.P."/>
            <person name="Benito M.-I."/>
            <person name="Town C.D."/>
            <person name="Fujii C.Y."/>
            <person name="Mason T.M."/>
            <person name="Bowman C.L."/>
            <person name="Barnstead M.E."/>
            <person name="Feldblyum T.V."/>
            <person name="Buell C.R."/>
            <person name="Ketchum K.A."/>
            <person name="Lee J.J."/>
            <person name="Ronning C.M."/>
            <person name="Koo H.L."/>
            <person name="Moffat K.S."/>
            <person name="Cronin L.A."/>
            <person name="Shen M."/>
            <person name="Pai G."/>
            <person name="Van Aken S."/>
            <person name="Umayam L."/>
            <person name="Tallon L.J."/>
            <person name="Gill J.E."/>
            <person name="Adams M.D."/>
            <person name="Carrera A.J."/>
            <person name="Creasy T.H."/>
            <person name="Goodman H.M."/>
            <person name="Somerville C.R."/>
            <person name="Copenhaver G.P."/>
            <person name="Preuss D."/>
            <person name="Nierman W.C."/>
            <person name="White O."/>
            <person name="Eisen J.A."/>
            <person name="Salzberg S.L."/>
            <person name="Fraser C.M."/>
            <person name="Venter J.C."/>
        </authorList>
    </citation>
    <scope>NUCLEOTIDE SEQUENCE [LARGE SCALE GENOMIC DNA]</scope>
    <source>
        <strain>cv. Columbia</strain>
    </source>
</reference>
<reference key="2">
    <citation type="journal article" date="2017" name="Plant J.">
        <title>Araport11: a complete reannotation of the Arabidopsis thaliana reference genome.</title>
        <authorList>
            <person name="Cheng C.Y."/>
            <person name="Krishnakumar V."/>
            <person name="Chan A.P."/>
            <person name="Thibaud-Nissen F."/>
            <person name="Schobel S."/>
            <person name="Town C.D."/>
        </authorList>
    </citation>
    <scope>GENOME REANNOTATION</scope>
    <source>
        <strain>cv. Columbia</strain>
    </source>
</reference>
<reference key="3">
    <citation type="submission" date="2004-05" db="EMBL/GenBank/DDBJ databases">
        <title>Arabidopsis ORF clones.</title>
        <authorList>
            <person name="Shinn P."/>
            <person name="Chen H."/>
            <person name="Cheuk R.F."/>
            <person name="Kim C.J."/>
            <person name="Carninci P."/>
            <person name="Hayashizaki Y."/>
            <person name="Ishida J."/>
            <person name="Kamiya A."/>
            <person name="Kawai J."/>
            <person name="Narusaka M."/>
            <person name="Sakurai T."/>
            <person name="Satou M."/>
            <person name="Seki M."/>
            <person name="Shinozaki K."/>
            <person name="Ecker J.R."/>
        </authorList>
    </citation>
    <scope>NUCLEOTIDE SEQUENCE [LARGE SCALE MRNA]</scope>
    <source>
        <strain>cv. Columbia</strain>
    </source>
</reference>
<reference key="4">
    <citation type="journal article" date="2002" name="Genome Biol.">
        <title>Evaluation and classification of RING-finger domains encoded by the Arabidopsis genome.</title>
        <authorList>
            <person name="Kosarev P."/>
            <person name="Mayer K.F.X."/>
            <person name="Hardtke C.S."/>
        </authorList>
    </citation>
    <scope>GENE FAMILY ORGANIZATION</scope>
</reference>
<reference key="5">
    <citation type="journal article" date="2006" name="J. Mol. Evol.">
        <title>The ATL gene family from Arabidopsis thaliana and Oryza sativa comprises a large number of putative ubiquitin ligases of the RING-H2 type.</title>
        <authorList>
            <person name="Serrano M."/>
            <person name="Parra S."/>
            <person name="Alcaraz L.D."/>
            <person name="Guzman P."/>
        </authorList>
    </citation>
    <scope>NOMENCLATURE</scope>
    <scope>GENE FAMILY ORGANIZATION</scope>
</reference>
<gene>
    <name type="primary">ATL28</name>
    <name type="ordered locus">At2g35420</name>
    <name type="ORF">T32F12.20</name>
</gene>
<protein>
    <recommendedName>
        <fullName>RING-H2 finger protein ATL28</fullName>
        <ecNumber evidence="4">2.3.2.27</ecNumber>
    </recommendedName>
    <alternativeName>
        <fullName evidence="4">RING-type E3 ubiquitin transferase ATL28</fullName>
    </alternativeName>
</protein>